<organism>
    <name type="scientific">Helicobacter pylori (strain ATCC 700392 / 26695)</name>
    <name type="common">Campylobacter pylori</name>
    <dbReference type="NCBI Taxonomy" id="85962"/>
    <lineage>
        <taxon>Bacteria</taxon>
        <taxon>Pseudomonadati</taxon>
        <taxon>Campylobacterota</taxon>
        <taxon>Epsilonproteobacteria</taxon>
        <taxon>Campylobacterales</taxon>
        <taxon>Helicobacteraceae</taxon>
        <taxon>Helicobacter</taxon>
    </lineage>
</organism>
<sequence>MSAYIIETLIKILILVAVFSALGGFATYIERKVLAYFQRRLGPCYVGPFGLLQVAADGIKLFTKEDIIPQGANKFIFTLAPIIAMVSAFVSMAPIPFFPNFTLFGYEIKPLISDINIGFLFFLAVGSAGIYAPILAGLASNNKYSLIGSARATIQLLSFEVVSTLTILAPLMVVGSLSLVEINHYQSGGFLDWLVFKQPLAFVLFLIASYAELNRTPFDLLEHEAEIVAGYCTEYSGLKWGMFFLAEYAHLFAFSFVISIVFFGGFNAWGFIPGGIAILIKAGFFVFLSMWVRATYPHVRPDQLMDMCWKIMLPLALLNIVLTGIIILI</sequence>
<keyword id="KW-0997">Cell inner membrane</keyword>
<keyword id="KW-1003">Cell membrane</keyword>
<keyword id="KW-0472">Membrane</keyword>
<keyword id="KW-0520">NAD</keyword>
<keyword id="KW-0874">Quinone</keyword>
<keyword id="KW-1185">Reference proteome</keyword>
<keyword id="KW-1278">Translocase</keyword>
<keyword id="KW-0812">Transmembrane</keyword>
<keyword id="KW-1133">Transmembrane helix</keyword>
<keyword id="KW-0830">Ubiquinone</keyword>
<accession>O25857</accession>
<dbReference type="EC" id="7.1.1.-" evidence="1"/>
<dbReference type="EMBL" id="AE000511">
    <property type="protein sequence ID" value="AAD08311.1"/>
    <property type="molecule type" value="Genomic_DNA"/>
</dbReference>
<dbReference type="PIR" id="C64678">
    <property type="entry name" value="C64678"/>
</dbReference>
<dbReference type="RefSeq" id="NP_208059.1">
    <property type="nucleotide sequence ID" value="NC_000915.1"/>
</dbReference>
<dbReference type="RefSeq" id="WP_001277308.1">
    <property type="nucleotide sequence ID" value="NC_018939.1"/>
</dbReference>
<dbReference type="SMR" id="O25857"/>
<dbReference type="DIP" id="DIP-3086N"/>
<dbReference type="FunCoup" id="O25857">
    <property type="interactions" value="120"/>
</dbReference>
<dbReference type="IntAct" id="O25857">
    <property type="interactions" value="2"/>
</dbReference>
<dbReference type="MINT" id="O25857"/>
<dbReference type="STRING" id="85962.HP_1267"/>
<dbReference type="PaxDb" id="85962-C694_06550"/>
<dbReference type="DNASU" id="898785"/>
<dbReference type="EnsemblBacteria" id="AAD08311">
    <property type="protein sequence ID" value="AAD08311"/>
    <property type="gene ID" value="HP_1267"/>
</dbReference>
<dbReference type="KEGG" id="heo:C694_06550"/>
<dbReference type="KEGG" id="hpy:HP_1267"/>
<dbReference type="PATRIC" id="fig|85962.47.peg.1360"/>
<dbReference type="eggNOG" id="COG1005">
    <property type="taxonomic scope" value="Bacteria"/>
</dbReference>
<dbReference type="InParanoid" id="O25857"/>
<dbReference type="OrthoDB" id="9803734at2"/>
<dbReference type="PhylomeDB" id="O25857"/>
<dbReference type="BioCyc" id="MetaCyc:HP_RS06250-MONOMER"/>
<dbReference type="Proteomes" id="UP000000429">
    <property type="component" value="Chromosome"/>
</dbReference>
<dbReference type="GO" id="GO:0005886">
    <property type="term" value="C:plasma membrane"/>
    <property type="evidence" value="ECO:0007669"/>
    <property type="project" value="UniProtKB-SubCell"/>
</dbReference>
<dbReference type="GO" id="GO:0045271">
    <property type="term" value="C:respiratory chain complex I"/>
    <property type="evidence" value="ECO:0000318"/>
    <property type="project" value="GO_Central"/>
</dbReference>
<dbReference type="GO" id="GO:0016655">
    <property type="term" value="F:oxidoreductase activity, acting on NAD(P)H, quinone or similar compound as acceptor"/>
    <property type="evidence" value="ECO:0007669"/>
    <property type="project" value="UniProtKB-UniRule"/>
</dbReference>
<dbReference type="GO" id="GO:0048038">
    <property type="term" value="F:quinone binding"/>
    <property type="evidence" value="ECO:0007669"/>
    <property type="project" value="UniProtKB-KW"/>
</dbReference>
<dbReference type="GO" id="GO:0009060">
    <property type="term" value="P:aerobic respiration"/>
    <property type="evidence" value="ECO:0000318"/>
    <property type="project" value="GO_Central"/>
</dbReference>
<dbReference type="HAMAP" id="MF_01350">
    <property type="entry name" value="NDH1_NuoH"/>
    <property type="match status" value="1"/>
</dbReference>
<dbReference type="InterPro" id="IPR001694">
    <property type="entry name" value="NADH_UbQ_OxRdtase_su1/FPO"/>
</dbReference>
<dbReference type="InterPro" id="IPR018086">
    <property type="entry name" value="NADH_UbQ_OxRdtase_su1_CS"/>
</dbReference>
<dbReference type="NCBIfam" id="NF004741">
    <property type="entry name" value="PRK06076.1-2"/>
    <property type="match status" value="1"/>
</dbReference>
<dbReference type="PANTHER" id="PTHR11432">
    <property type="entry name" value="NADH DEHYDROGENASE SUBUNIT 1"/>
    <property type="match status" value="1"/>
</dbReference>
<dbReference type="PANTHER" id="PTHR11432:SF3">
    <property type="entry name" value="NADH-UBIQUINONE OXIDOREDUCTASE CHAIN 1"/>
    <property type="match status" value="1"/>
</dbReference>
<dbReference type="Pfam" id="PF00146">
    <property type="entry name" value="NADHdh"/>
    <property type="match status" value="1"/>
</dbReference>
<dbReference type="PROSITE" id="PS00667">
    <property type="entry name" value="COMPLEX1_ND1_1"/>
    <property type="match status" value="1"/>
</dbReference>
<evidence type="ECO:0000255" key="1">
    <source>
        <dbReference type="HAMAP-Rule" id="MF_01350"/>
    </source>
</evidence>
<comment type="function">
    <text evidence="1">NDH-1 shuttles electrons from NADH, via FMN and iron-sulfur (Fe-S) centers, to quinones in the respiratory chain. The immediate electron acceptor for the enzyme in this species is believed to be ubiquinone. Couples the redox reaction to proton translocation (for every two electrons transferred, four hydrogen ions are translocated across the cytoplasmic membrane), and thus conserves the redox energy in a proton gradient. This subunit may bind ubiquinone.</text>
</comment>
<comment type="catalytic activity">
    <reaction evidence="1">
        <text>a quinone + NADH + 5 H(+)(in) = a quinol + NAD(+) + 4 H(+)(out)</text>
        <dbReference type="Rhea" id="RHEA:57888"/>
        <dbReference type="ChEBI" id="CHEBI:15378"/>
        <dbReference type="ChEBI" id="CHEBI:24646"/>
        <dbReference type="ChEBI" id="CHEBI:57540"/>
        <dbReference type="ChEBI" id="CHEBI:57945"/>
        <dbReference type="ChEBI" id="CHEBI:132124"/>
    </reaction>
</comment>
<comment type="subunit">
    <text evidence="1">NDH-1 is composed of 14 different subunits. Subunits NuoA, H, J, K, L, M, N constitute the membrane sector of the complex.</text>
</comment>
<comment type="subcellular location">
    <subcellularLocation>
        <location evidence="1">Cell inner membrane</location>
        <topology evidence="1">Multi-pass membrane protein</topology>
    </subcellularLocation>
</comment>
<comment type="similarity">
    <text evidence="1">Belongs to the complex I subunit 1 family.</text>
</comment>
<proteinExistence type="inferred from homology"/>
<protein>
    <recommendedName>
        <fullName evidence="1">NADH-quinone oxidoreductase subunit H</fullName>
        <ecNumber evidence="1">7.1.1.-</ecNumber>
    </recommendedName>
    <alternativeName>
        <fullName evidence="1">NADH dehydrogenase I subunit H</fullName>
    </alternativeName>
    <alternativeName>
        <fullName evidence="1">NDH-1 subunit H</fullName>
    </alternativeName>
</protein>
<name>NUOH_HELPY</name>
<gene>
    <name evidence="1" type="primary">nuoH</name>
    <name type="ordered locus">HP_1267</name>
</gene>
<feature type="chain" id="PRO_0000240079" description="NADH-quinone oxidoreductase subunit H">
    <location>
        <begin position="1"/>
        <end position="329"/>
    </location>
</feature>
<feature type="transmembrane region" description="Helical" evidence="1">
    <location>
        <begin position="9"/>
        <end position="29"/>
    </location>
</feature>
<feature type="transmembrane region" description="Helical" evidence="1">
    <location>
        <begin position="42"/>
        <end position="62"/>
    </location>
</feature>
<feature type="transmembrane region" description="Helical" evidence="1">
    <location>
        <begin position="75"/>
        <end position="95"/>
    </location>
</feature>
<feature type="transmembrane region" description="Helical" evidence="1">
    <location>
        <begin position="117"/>
        <end position="137"/>
    </location>
</feature>
<feature type="transmembrane region" description="Helical" evidence="1">
    <location>
        <begin position="154"/>
        <end position="174"/>
    </location>
</feature>
<feature type="transmembrane region" description="Helical" evidence="1">
    <location>
        <begin position="188"/>
        <end position="208"/>
    </location>
</feature>
<feature type="transmembrane region" description="Helical" evidence="1">
    <location>
        <begin position="238"/>
        <end position="258"/>
    </location>
</feature>
<feature type="transmembrane region" description="Helical" evidence="1">
    <location>
        <begin position="269"/>
        <end position="291"/>
    </location>
</feature>
<feature type="transmembrane region" description="Helical" evidence="1">
    <location>
        <begin position="309"/>
        <end position="329"/>
    </location>
</feature>
<reference key="1">
    <citation type="journal article" date="1997" name="Nature">
        <title>The complete genome sequence of the gastric pathogen Helicobacter pylori.</title>
        <authorList>
            <person name="Tomb J.-F."/>
            <person name="White O."/>
            <person name="Kerlavage A.R."/>
            <person name="Clayton R.A."/>
            <person name="Sutton G.G."/>
            <person name="Fleischmann R.D."/>
            <person name="Ketchum K.A."/>
            <person name="Klenk H.-P."/>
            <person name="Gill S.R."/>
            <person name="Dougherty B.A."/>
            <person name="Nelson K.E."/>
            <person name="Quackenbush J."/>
            <person name="Zhou L."/>
            <person name="Kirkness E.F."/>
            <person name="Peterson S.N."/>
            <person name="Loftus B.J."/>
            <person name="Richardson D.L."/>
            <person name="Dodson R.J."/>
            <person name="Khalak H.G."/>
            <person name="Glodek A."/>
            <person name="McKenney K."/>
            <person name="FitzGerald L.M."/>
            <person name="Lee N."/>
            <person name="Adams M.D."/>
            <person name="Hickey E.K."/>
            <person name="Berg D.E."/>
            <person name="Gocayne J.D."/>
            <person name="Utterback T.R."/>
            <person name="Peterson J.D."/>
            <person name="Kelley J.M."/>
            <person name="Cotton M.D."/>
            <person name="Weidman J.F."/>
            <person name="Fujii C."/>
            <person name="Bowman C."/>
            <person name="Watthey L."/>
            <person name="Wallin E."/>
            <person name="Hayes W.S."/>
            <person name="Borodovsky M."/>
            <person name="Karp P.D."/>
            <person name="Smith H.O."/>
            <person name="Fraser C.M."/>
            <person name="Venter J.C."/>
        </authorList>
    </citation>
    <scope>NUCLEOTIDE SEQUENCE [LARGE SCALE GENOMIC DNA]</scope>
    <source>
        <strain>ATCC 700392 / 26695</strain>
    </source>
</reference>